<feature type="chain" id="PRO_1000135331" description="Phosphoribosyl-AMP cyclohydrolase">
    <location>
        <begin position="1"/>
        <end position="101"/>
    </location>
</feature>
<feature type="binding site" evidence="1">
    <location>
        <position position="71"/>
    </location>
    <ligand>
        <name>Mg(2+)</name>
        <dbReference type="ChEBI" id="CHEBI:18420"/>
    </ligand>
</feature>
<feature type="binding site" evidence="1">
    <location>
        <position position="72"/>
    </location>
    <ligand>
        <name>Zn(2+)</name>
        <dbReference type="ChEBI" id="CHEBI:29105"/>
        <note>ligand shared between dimeric partners</note>
    </ligand>
</feature>
<feature type="binding site" evidence="1">
    <location>
        <position position="73"/>
    </location>
    <ligand>
        <name>Mg(2+)</name>
        <dbReference type="ChEBI" id="CHEBI:18420"/>
    </ligand>
</feature>
<feature type="binding site" evidence="1">
    <location>
        <position position="75"/>
    </location>
    <ligand>
        <name>Mg(2+)</name>
        <dbReference type="ChEBI" id="CHEBI:18420"/>
    </ligand>
</feature>
<feature type="binding site" evidence="1">
    <location>
        <position position="88"/>
    </location>
    <ligand>
        <name>Zn(2+)</name>
        <dbReference type="ChEBI" id="CHEBI:29105"/>
        <note>ligand shared between dimeric partners</note>
    </ligand>
</feature>
<feature type="binding site" evidence="1">
    <location>
        <position position="95"/>
    </location>
    <ligand>
        <name>Zn(2+)</name>
        <dbReference type="ChEBI" id="CHEBI:29105"/>
        <note>ligand shared between dimeric partners</note>
    </ligand>
</feature>
<protein>
    <recommendedName>
        <fullName evidence="1">Phosphoribosyl-AMP cyclohydrolase</fullName>
        <shortName evidence="1">PRA-CH</shortName>
        <ecNumber evidence="1">3.5.4.19</ecNumber>
    </recommendedName>
</protein>
<gene>
    <name evidence="1" type="primary">hisI</name>
    <name type="ordered locus">BCG9842_B3880</name>
</gene>
<dbReference type="EC" id="3.5.4.19" evidence="1"/>
<dbReference type="EMBL" id="CP001186">
    <property type="protein sequence ID" value="ACK95379.1"/>
    <property type="molecule type" value="Genomic_DNA"/>
</dbReference>
<dbReference type="RefSeq" id="WP_000803959.1">
    <property type="nucleotide sequence ID" value="NC_011772.1"/>
</dbReference>
<dbReference type="SMR" id="B7INA4"/>
<dbReference type="KEGG" id="bcg:BCG9842_B3880"/>
<dbReference type="HOGENOM" id="CLU_048577_5_3_9"/>
<dbReference type="UniPathway" id="UPA00031">
    <property type="reaction ID" value="UER00008"/>
</dbReference>
<dbReference type="Proteomes" id="UP000006744">
    <property type="component" value="Chromosome"/>
</dbReference>
<dbReference type="GO" id="GO:0005737">
    <property type="term" value="C:cytoplasm"/>
    <property type="evidence" value="ECO:0007669"/>
    <property type="project" value="UniProtKB-SubCell"/>
</dbReference>
<dbReference type="GO" id="GO:0000287">
    <property type="term" value="F:magnesium ion binding"/>
    <property type="evidence" value="ECO:0007669"/>
    <property type="project" value="UniProtKB-UniRule"/>
</dbReference>
<dbReference type="GO" id="GO:0004635">
    <property type="term" value="F:phosphoribosyl-AMP cyclohydrolase activity"/>
    <property type="evidence" value="ECO:0007669"/>
    <property type="project" value="UniProtKB-UniRule"/>
</dbReference>
<dbReference type="GO" id="GO:0008270">
    <property type="term" value="F:zinc ion binding"/>
    <property type="evidence" value="ECO:0007669"/>
    <property type="project" value="UniProtKB-UniRule"/>
</dbReference>
<dbReference type="GO" id="GO:0000105">
    <property type="term" value="P:L-histidine biosynthetic process"/>
    <property type="evidence" value="ECO:0007669"/>
    <property type="project" value="UniProtKB-UniRule"/>
</dbReference>
<dbReference type="FunFam" id="3.10.20.810:FF:000001">
    <property type="entry name" value="Histidine biosynthesis bifunctional protein HisIE"/>
    <property type="match status" value="1"/>
</dbReference>
<dbReference type="Gene3D" id="3.10.20.810">
    <property type="entry name" value="Phosphoribosyl-AMP cyclohydrolase"/>
    <property type="match status" value="1"/>
</dbReference>
<dbReference type="HAMAP" id="MF_01021">
    <property type="entry name" value="HisI"/>
    <property type="match status" value="1"/>
</dbReference>
<dbReference type="InterPro" id="IPR026660">
    <property type="entry name" value="PRA-CH"/>
</dbReference>
<dbReference type="InterPro" id="IPR002496">
    <property type="entry name" value="PRib_AMP_CycHydrolase_dom"/>
</dbReference>
<dbReference type="InterPro" id="IPR038019">
    <property type="entry name" value="PRib_AMP_CycHydrolase_sf"/>
</dbReference>
<dbReference type="NCBIfam" id="NF000768">
    <property type="entry name" value="PRK00051.1"/>
    <property type="match status" value="1"/>
</dbReference>
<dbReference type="PANTHER" id="PTHR42945">
    <property type="entry name" value="HISTIDINE BIOSYNTHESIS BIFUNCTIONAL PROTEIN"/>
    <property type="match status" value="1"/>
</dbReference>
<dbReference type="PANTHER" id="PTHR42945:SF9">
    <property type="entry name" value="HISTIDINE BIOSYNTHESIS BIFUNCTIONAL PROTEIN HISIE"/>
    <property type="match status" value="1"/>
</dbReference>
<dbReference type="Pfam" id="PF01502">
    <property type="entry name" value="PRA-CH"/>
    <property type="match status" value="1"/>
</dbReference>
<dbReference type="SUPFAM" id="SSF141734">
    <property type="entry name" value="HisI-like"/>
    <property type="match status" value="1"/>
</dbReference>
<name>HIS3_BACC2</name>
<proteinExistence type="inferred from homology"/>
<keyword id="KW-0028">Amino-acid biosynthesis</keyword>
<keyword id="KW-0963">Cytoplasm</keyword>
<keyword id="KW-0368">Histidine biosynthesis</keyword>
<keyword id="KW-0378">Hydrolase</keyword>
<keyword id="KW-0460">Magnesium</keyword>
<keyword id="KW-0479">Metal-binding</keyword>
<keyword id="KW-0862">Zinc</keyword>
<accession>B7INA4</accession>
<sequence>MKPNFSKGLIPAIVIEEGTKEVLMLAYMNEDAYEKTLETKRTWFYSRSRQSLWNKGETSGNVQYVQSLYLDCDQDSIVVNVKQVGPACHTGEKTCFHYQII</sequence>
<organism>
    <name type="scientific">Bacillus cereus (strain G9842)</name>
    <dbReference type="NCBI Taxonomy" id="405531"/>
    <lineage>
        <taxon>Bacteria</taxon>
        <taxon>Bacillati</taxon>
        <taxon>Bacillota</taxon>
        <taxon>Bacilli</taxon>
        <taxon>Bacillales</taxon>
        <taxon>Bacillaceae</taxon>
        <taxon>Bacillus</taxon>
        <taxon>Bacillus cereus group</taxon>
    </lineage>
</organism>
<evidence type="ECO:0000255" key="1">
    <source>
        <dbReference type="HAMAP-Rule" id="MF_01021"/>
    </source>
</evidence>
<reference key="1">
    <citation type="submission" date="2008-10" db="EMBL/GenBank/DDBJ databases">
        <title>Genome sequence of Bacillus cereus G9842.</title>
        <authorList>
            <person name="Dodson R.J."/>
            <person name="Durkin A.S."/>
            <person name="Rosovitz M.J."/>
            <person name="Rasko D.A."/>
            <person name="Hoffmaster A."/>
            <person name="Ravel J."/>
            <person name="Sutton G."/>
        </authorList>
    </citation>
    <scope>NUCLEOTIDE SEQUENCE [LARGE SCALE GENOMIC DNA]</scope>
    <source>
        <strain>G9842</strain>
    </source>
</reference>
<comment type="function">
    <text evidence="1">Catalyzes the hydrolysis of the adenine ring of phosphoribosyl-AMP.</text>
</comment>
<comment type="catalytic activity">
    <reaction evidence="1">
        <text>1-(5-phospho-beta-D-ribosyl)-5'-AMP + H2O = 1-(5-phospho-beta-D-ribosyl)-5-[(5-phospho-beta-D-ribosylamino)methylideneamino]imidazole-4-carboxamide</text>
        <dbReference type="Rhea" id="RHEA:20049"/>
        <dbReference type="ChEBI" id="CHEBI:15377"/>
        <dbReference type="ChEBI" id="CHEBI:58435"/>
        <dbReference type="ChEBI" id="CHEBI:59457"/>
        <dbReference type="EC" id="3.5.4.19"/>
    </reaction>
</comment>
<comment type="cofactor">
    <cofactor evidence="1">
        <name>Mg(2+)</name>
        <dbReference type="ChEBI" id="CHEBI:18420"/>
    </cofactor>
    <text evidence="1">Binds 1 Mg(2+) ion per subunit.</text>
</comment>
<comment type="cofactor">
    <cofactor evidence="1">
        <name>Zn(2+)</name>
        <dbReference type="ChEBI" id="CHEBI:29105"/>
    </cofactor>
    <text evidence="1">Binds 1 zinc ion per subunit.</text>
</comment>
<comment type="pathway">
    <text evidence="1">Amino-acid biosynthesis; L-histidine biosynthesis; L-histidine from 5-phospho-alpha-D-ribose 1-diphosphate: step 3/9.</text>
</comment>
<comment type="subunit">
    <text evidence="1">Homodimer.</text>
</comment>
<comment type="subcellular location">
    <subcellularLocation>
        <location evidence="1">Cytoplasm</location>
    </subcellularLocation>
</comment>
<comment type="similarity">
    <text evidence="1">Belongs to the PRA-CH family.</text>
</comment>